<gene>
    <name evidence="5" type="primary">RKM2</name>
    <name evidence="7" type="ordered locus">YDR198C</name>
</gene>
<comment type="function">
    <text evidence="3 4">S-adenosyl-L-methionine-dependent protein-lysine N-methyltransferase that trimethylates 60S ribosomal protein L12 (RPL12A and RPL12B) at 'Lys-4' and 'Lys-11'.</text>
</comment>
<comment type="miscellaneous">
    <text evidence="2">Present with 768 molecules/cell in log phase SD medium.</text>
</comment>
<comment type="similarity">
    <text evidence="1 6">Belongs to the class V-like SAM-binding methyltransferase superfamily. RKM2 family.</text>
</comment>
<feature type="chain" id="PRO_0000253809" description="Ribosomal lysine N-methyltransferase 2">
    <location>
        <begin position="1"/>
        <end position="479"/>
    </location>
</feature>
<feature type="domain" description="SET" evidence="1">
    <location>
        <begin position="22"/>
        <end position="325"/>
    </location>
</feature>
<feature type="binding site" evidence="1">
    <location>
        <position position="324"/>
    </location>
    <ligand>
        <name>S-adenosyl-L-methionine</name>
        <dbReference type="ChEBI" id="CHEBI:59789"/>
    </ligand>
</feature>
<reference key="1">
    <citation type="journal article" date="1997" name="Nature">
        <title>The nucleotide sequence of Saccharomyces cerevisiae chromosome IV.</title>
        <authorList>
            <person name="Jacq C."/>
            <person name="Alt-Moerbe J."/>
            <person name="Andre B."/>
            <person name="Arnold W."/>
            <person name="Bahr A."/>
            <person name="Ballesta J.P.G."/>
            <person name="Bargues M."/>
            <person name="Baron L."/>
            <person name="Becker A."/>
            <person name="Biteau N."/>
            <person name="Bloecker H."/>
            <person name="Blugeon C."/>
            <person name="Boskovic J."/>
            <person name="Brandt P."/>
            <person name="Brueckner M."/>
            <person name="Buitrago M.J."/>
            <person name="Coster F."/>
            <person name="Delaveau T."/>
            <person name="del Rey F."/>
            <person name="Dujon B."/>
            <person name="Eide L.G."/>
            <person name="Garcia-Cantalejo J.M."/>
            <person name="Goffeau A."/>
            <person name="Gomez-Peris A."/>
            <person name="Granotier C."/>
            <person name="Hanemann V."/>
            <person name="Hankeln T."/>
            <person name="Hoheisel J.D."/>
            <person name="Jaeger W."/>
            <person name="Jimenez A."/>
            <person name="Jonniaux J.-L."/>
            <person name="Kraemer C."/>
            <person name="Kuester H."/>
            <person name="Laamanen P."/>
            <person name="Legros Y."/>
            <person name="Louis E.J."/>
            <person name="Moeller-Rieker S."/>
            <person name="Monnet A."/>
            <person name="Moro M."/>
            <person name="Mueller-Auer S."/>
            <person name="Nussbaumer B."/>
            <person name="Paricio N."/>
            <person name="Paulin L."/>
            <person name="Perea J."/>
            <person name="Perez-Alonso M."/>
            <person name="Perez-Ortin J.E."/>
            <person name="Pohl T.M."/>
            <person name="Prydz H."/>
            <person name="Purnelle B."/>
            <person name="Rasmussen S.W."/>
            <person name="Remacha M.A."/>
            <person name="Revuelta J.L."/>
            <person name="Rieger M."/>
            <person name="Salom D."/>
            <person name="Saluz H.P."/>
            <person name="Saiz J.E."/>
            <person name="Saren A.-M."/>
            <person name="Schaefer M."/>
            <person name="Scharfe M."/>
            <person name="Schmidt E.R."/>
            <person name="Schneider C."/>
            <person name="Scholler P."/>
            <person name="Schwarz S."/>
            <person name="Soler-Mira A."/>
            <person name="Urrestarazu L.A."/>
            <person name="Verhasselt P."/>
            <person name="Vissers S."/>
            <person name="Voet M."/>
            <person name="Volckaert G."/>
            <person name="Wagner G."/>
            <person name="Wambutt R."/>
            <person name="Wedler E."/>
            <person name="Wedler H."/>
            <person name="Woelfl S."/>
            <person name="Harris D.E."/>
            <person name="Bowman S."/>
            <person name="Brown D."/>
            <person name="Churcher C.M."/>
            <person name="Connor R."/>
            <person name="Dedman K."/>
            <person name="Gentles S."/>
            <person name="Hamlin N."/>
            <person name="Hunt S."/>
            <person name="Jones L."/>
            <person name="McDonald S."/>
            <person name="Murphy L.D."/>
            <person name="Niblett D."/>
            <person name="Odell C."/>
            <person name="Oliver K."/>
            <person name="Rajandream M.A."/>
            <person name="Richards C."/>
            <person name="Shore L."/>
            <person name="Walsh S.V."/>
            <person name="Barrell B.G."/>
            <person name="Dietrich F.S."/>
            <person name="Mulligan J.T."/>
            <person name="Allen E."/>
            <person name="Araujo R."/>
            <person name="Aviles E."/>
            <person name="Berno A."/>
            <person name="Carpenter J."/>
            <person name="Chen E."/>
            <person name="Cherry J.M."/>
            <person name="Chung E."/>
            <person name="Duncan M."/>
            <person name="Hunicke-Smith S."/>
            <person name="Hyman R.W."/>
            <person name="Komp C."/>
            <person name="Lashkari D."/>
            <person name="Lew H."/>
            <person name="Lin D."/>
            <person name="Mosedale D."/>
            <person name="Nakahara K."/>
            <person name="Namath A."/>
            <person name="Oefner P."/>
            <person name="Oh C."/>
            <person name="Petel F.X."/>
            <person name="Roberts D."/>
            <person name="Schramm S."/>
            <person name="Schroeder M."/>
            <person name="Shogren T."/>
            <person name="Shroff N."/>
            <person name="Winant A."/>
            <person name="Yelton M.A."/>
            <person name="Botstein D."/>
            <person name="Davis R.W."/>
            <person name="Johnston M."/>
            <person name="Andrews S."/>
            <person name="Brinkman R."/>
            <person name="Cooper J."/>
            <person name="Ding H."/>
            <person name="Du Z."/>
            <person name="Favello A."/>
            <person name="Fulton L."/>
            <person name="Gattung S."/>
            <person name="Greco T."/>
            <person name="Hallsworth K."/>
            <person name="Hawkins J."/>
            <person name="Hillier L.W."/>
            <person name="Jier M."/>
            <person name="Johnson D."/>
            <person name="Johnston L."/>
            <person name="Kirsten J."/>
            <person name="Kucaba T."/>
            <person name="Langston Y."/>
            <person name="Latreille P."/>
            <person name="Le T."/>
            <person name="Mardis E."/>
            <person name="Menezes S."/>
            <person name="Miller N."/>
            <person name="Nhan M."/>
            <person name="Pauley A."/>
            <person name="Peluso D."/>
            <person name="Rifkin L."/>
            <person name="Riles L."/>
            <person name="Taich A."/>
            <person name="Trevaskis E."/>
            <person name="Vignati D."/>
            <person name="Wilcox L."/>
            <person name="Wohldman P."/>
            <person name="Vaudin M."/>
            <person name="Wilson R."/>
            <person name="Waterston R."/>
            <person name="Albermann K."/>
            <person name="Hani J."/>
            <person name="Heumann K."/>
            <person name="Kleine K."/>
            <person name="Mewes H.-W."/>
            <person name="Zollner A."/>
            <person name="Zaccaria P."/>
        </authorList>
    </citation>
    <scope>NUCLEOTIDE SEQUENCE [LARGE SCALE GENOMIC DNA]</scope>
    <source>
        <strain>ATCC 204508 / S288c</strain>
    </source>
</reference>
<reference key="2">
    <citation type="journal article" date="2014" name="G3 (Bethesda)">
        <title>The reference genome sequence of Saccharomyces cerevisiae: Then and now.</title>
        <authorList>
            <person name="Engel S.R."/>
            <person name="Dietrich F.S."/>
            <person name="Fisk D.G."/>
            <person name="Binkley G."/>
            <person name="Balakrishnan R."/>
            <person name="Costanzo M.C."/>
            <person name="Dwight S.S."/>
            <person name="Hitz B.C."/>
            <person name="Karra K."/>
            <person name="Nash R.S."/>
            <person name="Weng S."/>
            <person name="Wong E.D."/>
            <person name="Lloyd P."/>
            <person name="Skrzypek M.S."/>
            <person name="Miyasato S.R."/>
            <person name="Simison M."/>
            <person name="Cherry J.M."/>
        </authorList>
    </citation>
    <scope>GENOME REANNOTATION</scope>
    <source>
        <strain>ATCC 204508 / S288c</strain>
    </source>
</reference>
<reference key="3">
    <citation type="journal article" date="2003" name="Nature">
        <title>Global analysis of protein expression in yeast.</title>
        <authorList>
            <person name="Ghaemmaghami S."/>
            <person name="Huh W.-K."/>
            <person name="Bower K."/>
            <person name="Howson R.W."/>
            <person name="Belle A."/>
            <person name="Dephoure N."/>
            <person name="O'Shea E.K."/>
            <person name="Weissman J.S."/>
        </authorList>
    </citation>
    <scope>LEVEL OF PROTEIN EXPRESSION [LARGE SCALE ANALYSIS]</scope>
</reference>
<reference key="4">
    <citation type="journal article" date="2006" name="J. Biol. Chem.">
        <title>A novel SET domain methyltransferase in yeast: Rkm2-dependent trimethylation of ribosomal protein L12ab at lysine 10.</title>
        <authorList>
            <person name="Porras-Yakushi T.R."/>
            <person name="Whitelegge J.P."/>
            <person name="Clarke S."/>
        </authorList>
    </citation>
    <scope>FUNCTION</scope>
</reference>
<reference key="5">
    <citation type="journal article" date="2008" name="J. Biol. Chem.">
        <title>Identification of two SET domain proteins required for methylation of lysine residues in yeast ribosomal protein Rpl42ab.</title>
        <authorList>
            <person name="Webb K.J."/>
            <person name="Laganowsky A."/>
            <person name="Whitelegge J.P."/>
            <person name="Clarke S.G."/>
        </authorList>
    </citation>
    <scope>FUNCTION</scope>
</reference>
<sequence>MEGKVDVLLTWLKKSDKFYIAPNISICESPETGRGIVLSHGSIRKNDIIVSVPSSKQLNFHTILYHISKFNKELNIPGITIDRKPINYEDNIIEAENKAWADPRYGLYSELSKEFLLSLSSFQLVSFYILVENFLLPKWTHNEIYSDWKPFFDVWPSMEELRSIPAIWNCDPNSRYHSLIEYLPAASRKHMARISGLVREDWETISEVVLKWNEIYGSLSCTKNSDKFTSDELFSLFVHVYFIINSRCLYAKIPLKIEDSPSNFTLVPYVDFMNHICESDLHCYPQLSPQLRSEGENIIGIGQFTIRCGDHLYDNINEELFLNYGAHSNDFLLNEYGFVVDGNKWNYLDISDEIIELIDDDKKEVKTFLLEHDYWGDYTINETDISYRIFVALNYYVTRDERRVRKFIEGYISEDYFKPKISSVLKELLVSLTAKYTKTLSELTEKVSNLENNLCLQNLITIYKGYIKILTQHLQDLQS</sequence>
<dbReference type="EC" id="2.1.1.-" evidence="3"/>
<dbReference type="EMBL" id="Z48784">
    <property type="protein sequence ID" value="CAA88711.1"/>
    <property type="molecule type" value="Genomic_DNA"/>
</dbReference>
<dbReference type="EMBL" id="BK006938">
    <property type="protein sequence ID" value="DAA12041.1"/>
    <property type="molecule type" value="Genomic_DNA"/>
</dbReference>
<dbReference type="PIR" id="S52705">
    <property type="entry name" value="S52705"/>
</dbReference>
<dbReference type="RefSeq" id="NP_010484.1">
    <property type="nucleotide sequence ID" value="NM_001180506.1"/>
</dbReference>
<dbReference type="BioGRID" id="32250">
    <property type="interactions" value="55"/>
</dbReference>
<dbReference type="DIP" id="DIP-6397N"/>
<dbReference type="FunCoup" id="Q03942">
    <property type="interactions" value="100"/>
</dbReference>
<dbReference type="IntAct" id="Q03942">
    <property type="interactions" value="3"/>
</dbReference>
<dbReference type="STRING" id="4932.YDR198C"/>
<dbReference type="iPTMnet" id="Q03942"/>
<dbReference type="PaxDb" id="4932-YDR198C"/>
<dbReference type="PeptideAtlas" id="Q03942"/>
<dbReference type="EnsemblFungi" id="YDR198C_mRNA">
    <property type="protein sequence ID" value="YDR198C"/>
    <property type="gene ID" value="YDR198C"/>
</dbReference>
<dbReference type="GeneID" id="851779"/>
<dbReference type="KEGG" id="sce:YDR198C"/>
<dbReference type="AGR" id="SGD:S000002606"/>
<dbReference type="SGD" id="S000002606">
    <property type="gene designation" value="RKM2"/>
</dbReference>
<dbReference type="VEuPathDB" id="FungiDB:YDR198C"/>
<dbReference type="eggNOG" id="KOG1337">
    <property type="taxonomic scope" value="Eukaryota"/>
</dbReference>
<dbReference type="GeneTree" id="ENSGT00940000153577"/>
<dbReference type="HOGENOM" id="CLU_041939_0_0_1"/>
<dbReference type="InParanoid" id="Q03942"/>
<dbReference type="OMA" id="YWGDYTI"/>
<dbReference type="OrthoDB" id="341421at2759"/>
<dbReference type="BioCyc" id="YEAST:G3O-29784-MONOMER"/>
<dbReference type="Reactome" id="R-SCE-3214841">
    <property type="pathway name" value="PKMTs methylate histone lysines"/>
</dbReference>
<dbReference type="BioGRID-ORCS" id="851779">
    <property type="hits" value="0 hits in 10 CRISPR screens"/>
</dbReference>
<dbReference type="PRO" id="PR:Q03942"/>
<dbReference type="Proteomes" id="UP000002311">
    <property type="component" value="Chromosome IV"/>
</dbReference>
<dbReference type="RNAct" id="Q03942">
    <property type="molecule type" value="protein"/>
</dbReference>
<dbReference type="GO" id="GO:0046975">
    <property type="term" value="F:histone H3K36 methyltransferase activity"/>
    <property type="evidence" value="ECO:0000318"/>
    <property type="project" value="GO_Central"/>
</dbReference>
<dbReference type="GO" id="GO:0042800">
    <property type="term" value="F:histone H3K4 methyltransferase activity"/>
    <property type="evidence" value="ECO:0000318"/>
    <property type="project" value="GO_Central"/>
</dbReference>
<dbReference type="GO" id="GO:0016279">
    <property type="term" value="F:protein-lysine N-methyltransferase activity"/>
    <property type="evidence" value="ECO:0000314"/>
    <property type="project" value="SGD"/>
</dbReference>
<dbReference type="GO" id="GO:0003713">
    <property type="term" value="F:transcription coactivator activity"/>
    <property type="evidence" value="ECO:0000318"/>
    <property type="project" value="GO_Central"/>
</dbReference>
<dbReference type="GO" id="GO:0032259">
    <property type="term" value="P:methylation"/>
    <property type="evidence" value="ECO:0007669"/>
    <property type="project" value="UniProtKB-KW"/>
</dbReference>
<dbReference type="GO" id="GO:0045944">
    <property type="term" value="P:positive regulation of transcription by RNA polymerase II"/>
    <property type="evidence" value="ECO:0000318"/>
    <property type="project" value="GO_Central"/>
</dbReference>
<dbReference type="CDD" id="cd19177">
    <property type="entry name" value="SET_SETD4"/>
    <property type="match status" value="1"/>
</dbReference>
<dbReference type="Gene3D" id="3.90.1410.10">
    <property type="entry name" value="set domain protein methyltransferase, domain 1"/>
    <property type="match status" value="1"/>
</dbReference>
<dbReference type="InterPro" id="IPR001214">
    <property type="entry name" value="SET_dom"/>
</dbReference>
<dbReference type="InterPro" id="IPR046341">
    <property type="entry name" value="SET_dom_sf"/>
</dbReference>
<dbReference type="InterPro" id="IPR016852">
    <property type="entry name" value="SET_MeTrfase"/>
</dbReference>
<dbReference type="InterPro" id="IPR050600">
    <property type="entry name" value="SETD3_SETD6_MTase"/>
</dbReference>
<dbReference type="InterPro" id="IPR044429">
    <property type="entry name" value="SETD4_SET"/>
</dbReference>
<dbReference type="PANTHER" id="PTHR13271:SF47">
    <property type="entry name" value="ACTIN-HISTIDINE N-METHYLTRANSFERASE"/>
    <property type="match status" value="1"/>
</dbReference>
<dbReference type="PANTHER" id="PTHR13271">
    <property type="entry name" value="UNCHARACTERIZED PUTATIVE METHYLTRANSFERASE"/>
    <property type="match status" value="1"/>
</dbReference>
<dbReference type="PIRSF" id="PIRSF027158">
    <property type="entry name" value="Lys_MTase_YDR198C_prd"/>
    <property type="match status" value="1"/>
</dbReference>
<dbReference type="SUPFAM" id="SSF82199">
    <property type="entry name" value="SET domain"/>
    <property type="match status" value="1"/>
</dbReference>
<dbReference type="PROSITE" id="PS50280">
    <property type="entry name" value="SET"/>
    <property type="match status" value="1"/>
</dbReference>
<name>RKM2_YEAST</name>
<accession>Q03942</accession>
<accession>D6VSI1</accession>
<protein>
    <recommendedName>
        <fullName evidence="5">Ribosomal lysine N-methyltransferase 2</fullName>
        <ecNumber evidence="3">2.1.1.-</ecNumber>
    </recommendedName>
</protein>
<evidence type="ECO:0000255" key="1">
    <source>
        <dbReference type="PROSITE-ProRule" id="PRU00190"/>
    </source>
</evidence>
<evidence type="ECO:0000269" key="2">
    <source>
    </source>
</evidence>
<evidence type="ECO:0000269" key="3">
    <source>
    </source>
</evidence>
<evidence type="ECO:0000269" key="4">
    <source>
    </source>
</evidence>
<evidence type="ECO:0000303" key="5">
    <source>
    </source>
</evidence>
<evidence type="ECO:0000305" key="6"/>
<evidence type="ECO:0000312" key="7">
    <source>
        <dbReference type="SGD" id="S000002606"/>
    </source>
</evidence>
<organism>
    <name type="scientific">Saccharomyces cerevisiae (strain ATCC 204508 / S288c)</name>
    <name type="common">Baker's yeast</name>
    <dbReference type="NCBI Taxonomy" id="559292"/>
    <lineage>
        <taxon>Eukaryota</taxon>
        <taxon>Fungi</taxon>
        <taxon>Dikarya</taxon>
        <taxon>Ascomycota</taxon>
        <taxon>Saccharomycotina</taxon>
        <taxon>Saccharomycetes</taxon>
        <taxon>Saccharomycetales</taxon>
        <taxon>Saccharomycetaceae</taxon>
        <taxon>Saccharomyces</taxon>
    </lineage>
</organism>
<proteinExistence type="evidence at protein level"/>
<keyword id="KW-0489">Methyltransferase</keyword>
<keyword id="KW-1185">Reference proteome</keyword>
<keyword id="KW-0949">S-adenosyl-L-methionine</keyword>
<keyword id="KW-0808">Transferase</keyword>